<dbReference type="EC" id="2.7.7.56" evidence="1"/>
<dbReference type="EMBL" id="AM747720">
    <property type="protein sequence ID" value="CAR53336.1"/>
    <property type="molecule type" value="Genomic_DNA"/>
</dbReference>
<dbReference type="RefSeq" id="WP_006486647.1">
    <property type="nucleotide sequence ID" value="NC_011000.1"/>
</dbReference>
<dbReference type="SMR" id="B4EBP8"/>
<dbReference type="KEGG" id="bcj:BCAL3014"/>
<dbReference type="eggNOG" id="COG0689">
    <property type="taxonomic scope" value="Bacteria"/>
</dbReference>
<dbReference type="HOGENOM" id="CLU_050858_0_0_4"/>
<dbReference type="BioCyc" id="BCEN216591:G1G1V-3338-MONOMER"/>
<dbReference type="Proteomes" id="UP000001035">
    <property type="component" value="Chromosome 1"/>
</dbReference>
<dbReference type="GO" id="GO:0000175">
    <property type="term" value="F:3'-5'-RNA exonuclease activity"/>
    <property type="evidence" value="ECO:0007669"/>
    <property type="project" value="UniProtKB-UniRule"/>
</dbReference>
<dbReference type="GO" id="GO:0000049">
    <property type="term" value="F:tRNA binding"/>
    <property type="evidence" value="ECO:0007669"/>
    <property type="project" value="UniProtKB-UniRule"/>
</dbReference>
<dbReference type="GO" id="GO:0009022">
    <property type="term" value="F:tRNA nucleotidyltransferase activity"/>
    <property type="evidence" value="ECO:0007669"/>
    <property type="project" value="UniProtKB-UniRule"/>
</dbReference>
<dbReference type="GO" id="GO:0016075">
    <property type="term" value="P:rRNA catabolic process"/>
    <property type="evidence" value="ECO:0007669"/>
    <property type="project" value="UniProtKB-UniRule"/>
</dbReference>
<dbReference type="GO" id="GO:0006364">
    <property type="term" value="P:rRNA processing"/>
    <property type="evidence" value="ECO:0007669"/>
    <property type="project" value="UniProtKB-KW"/>
</dbReference>
<dbReference type="GO" id="GO:0008033">
    <property type="term" value="P:tRNA processing"/>
    <property type="evidence" value="ECO:0007669"/>
    <property type="project" value="UniProtKB-UniRule"/>
</dbReference>
<dbReference type="CDD" id="cd11362">
    <property type="entry name" value="RNase_PH_bact"/>
    <property type="match status" value="1"/>
</dbReference>
<dbReference type="FunFam" id="3.30.230.70:FF:000003">
    <property type="entry name" value="Ribonuclease PH"/>
    <property type="match status" value="1"/>
</dbReference>
<dbReference type="Gene3D" id="3.30.230.70">
    <property type="entry name" value="GHMP Kinase, N-terminal domain"/>
    <property type="match status" value="1"/>
</dbReference>
<dbReference type="HAMAP" id="MF_00564">
    <property type="entry name" value="RNase_PH"/>
    <property type="match status" value="1"/>
</dbReference>
<dbReference type="InterPro" id="IPR001247">
    <property type="entry name" value="ExoRNase_PH_dom1"/>
</dbReference>
<dbReference type="InterPro" id="IPR015847">
    <property type="entry name" value="ExoRNase_PH_dom2"/>
</dbReference>
<dbReference type="InterPro" id="IPR036345">
    <property type="entry name" value="ExoRNase_PH_dom2_sf"/>
</dbReference>
<dbReference type="InterPro" id="IPR027408">
    <property type="entry name" value="PNPase/RNase_PH_dom_sf"/>
</dbReference>
<dbReference type="InterPro" id="IPR020568">
    <property type="entry name" value="Ribosomal_Su5_D2-typ_SF"/>
</dbReference>
<dbReference type="InterPro" id="IPR050080">
    <property type="entry name" value="RNase_PH"/>
</dbReference>
<dbReference type="InterPro" id="IPR002381">
    <property type="entry name" value="RNase_PH_bac-type"/>
</dbReference>
<dbReference type="InterPro" id="IPR018336">
    <property type="entry name" value="RNase_PH_CS"/>
</dbReference>
<dbReference type="NCBIfam" id="TIGR01966">
    <property type="entry name" value="RNasePH"/>
    <property type="match status" value="1"/>
</dbReference>
<dbReference type="PANTHER" id="PTHR11953">
    <property type="entry name" value="EXOSOME COMPLEX COMPONENT"/>
    <property type="match status" value="1"/>
</dbReference>
<dbReference type="PANTHER" id="PTHR11953:SF0">
    <property type="entry name" value="EXOSOME COMPLEX COMPONENT RRP41"/>
    <property type="match status" value="1"/>
</dbReference>
<dbReference type="Pfam" id="PF01138">
    <property type="entry name" value="RNase_PH"/>
    <property type="match status" value="1"/>
</dbReference>
<dbReference type="Pfam" id="PF03725">
    <property type="entry name" value="RNase_PH_C"/>
    <property type="match status" value="1"/>
</dbReference>
<dbReference type="SUPFAM" id="SSF55666">
    <property type="entry name" value="Ribonuclease PH domain 2-like"/>
    <property type="match status" value="1"/>
</dbReference>
<dbReference type="SUPFAM" id="SSF54211">
    <property type="entry name" value="Ribosomal protein S5 domain 2-like"/>
    <property type="match status" value="1"/>
</dbReference>
<dbReference type="PROSITE" id="PS01277">
    <property type="entry name" value="RIBONUCLEASE_PH"/>
    <property type="match status" value="1"/>
</dbReference>
<feature type="chain" id="PRO_1000129327" description="Ribonuclease PH">
    <location>
        <begin position="1"/>
        <end position="246"/>
    </location>
</feature>
<feature type="binding site" evidence="1">
    <location>
        <position position="91"/>
    </location>
    <ligand>
        <name>phosphate</name>
        <dbReference type="ChEBI" id="CHEBI:43474"/>
        <note>substrate</note>
    </ligand>
</feature>
<feature type="binding site" evidence="1">
    <location>
        <begin position="129"/>
        <end position="131"/>
    </location>
    <ligand>
        <name>phosphate</name>
        <dbReference type="ChEBI" id="CHEBI:43474"/>
        <note>substrate</note>
    </ligand>
</feature>
<reference key="1">
    <citation type="journal article" date="2009" name="J. Bacteriol.">
        <title>The genome of Burkholderia cenocepacia J2315, an epidemic pathogen of cystic fibrosis patients.</title>
        <authorList>
            <person name="Holden M.T."/>
            <person name="Seth-Smith H.M."/>
            <person name="Crossman L.C."/>
            <person name="Sebaihia M."/>
            <person name="Bentley S.D."/>
            <person name="Cerdeno-Tarraga A.M."/>
            <person name="Thomson N.R."/>
            <person name="Bason N."/>
            <person name="Quail M.A."/>
            <person name="Sharp S."/>
            <person name="Cherevach I."/>
            <person name="Churcher C."/>
            <person name="Goodhead I."/>
            <person name="Hauser H."/>
            <person name="Holroyd N."/>
            <person name="Mungall K."/>
            <person name="Scott P."/>
            <person name="Walker D."/>
            <person name="White B."/>
            <person name="Rose H."/>
            <person name="Iversen P."/>
            <person name="Mil-Homens D."/>
            <person name="Rocha E.P."/>
            <person name="Fialho A.M."/>
            <person name="Baldwin A."/>
            <person name="Dowson C."/>
            <person name="Barrell B.G."/>
            <person name="Govan J.R."/>
            <person name="Vandamme P."/>
            <person name="Hart C.A."/>
            <person name="Mahenthiralingam E."/>
            <person name="Parkhill J."/>
        </authorList>
    </citation>
    <scope>NUCLEOTIDE SEQUENCE [LARGE SCALE GENOMIC DNA]</scope>
    <source>
        <strain>ATCC BAA-245 / DSM 16553 / LMG 16656 / NCTC 13227 / J2315 / CF5610</strain>
    </source>
</reference>
<evidence type="ECO:0000255" key="1">
    <source>
        <dbReference type="HAMAP-Rule" id="MF_00564"/>
    </source>
</evidence>
<protein>
    <recommendedName>
        <fullName evidence="1">Ribonuclease PH</fullName>
        <shortName evidence="1">RNase PH</shortName>
        <ecNumber evidence="1">2.7.7.56</ecNumber>
    </recommendedName>
    <alternativeName>
        <fullName evidence="1">tRNA nucleotidyltransferase</fullName>
    </alternativeName>
</protein>
<name>RNPH_BURCJ</name>
<sequence>MTSSVSRPSGRRADELRKVALTRHYTKHAEGSVLVEFGDTKVLCTASVAERVPEFLRERGQGWLTAEYGMLPRATHTRSDREAARGKQTGRTQEIQRLIGRALRAVFDLEALGPRTLHIDCDVIQADGGTRTASITGAFVAAHDAVSTLIAAGKLTRSPITDHVAAISVGVYEGAPVLDLDYAEDSRCDTDMNVVMTGAGGFVEVQGTAEGVPFSRAEMNALLDLAQGGIAELVQLQKDVLGASHA</sequence>
<accession>B4EBP8</accession>
<proteinExistence type="inferred from homology"/>
<comment type="function">
    <text evidence="1">Phosphorolytic 3'-5' exoribonuclease that plays an important role in tRNA 3'-end maturation. Removes nucleotide residues following the 3'-CCA terminus of tRNAs; can also add nucleotides to the ends of RNA molecules by using nucleoside diphosphates as substrates, but this may not be physiologically important. Probably plays a role in initiation of 16S rRNA degradation (leading to ribosome degradation) during starvation.</text>
</comment>
<comment type="catalytic activity">
    <reaction evidence="1">
        <text>tRNA(n+1) + phosphate = tRNA(n) + a ribonucleoside 5'-diphosphate</text>
        <dbReference type="Rhea" id="RHEA:10628"/>
        <dbReference type="Rhea" id="RHEA-COMP:17343"/>
        <dbReference type="Rhea" id="RHEA-COMP:17344"/>
        <dbReference type="ChEBI" id="CHEBI:43474"/>
        <dbReference type="ChEBI" id="CHEBI:57930"/>
        <dbReference type="ChEBI" id="CHEBI:173114"/>
        <dbReference type="EC" id="2.7.7.56"/>
    </reaction>
</comment>
<comment type="subunit">
    <text evidence="1">Homohexameric ring arranged as a trimer of dimers.</text>
</comment>
<comment type="similarity">
    <text evidence="1">Belongs to the RNase PH family.</text>
</comment>
<keyword id="KW-0548">Nucleotidyltransferase</keyword>
<keyword id="KW-0694">RNA-binding</keyword>
<keyword id="KW-0698">rRNA processing</keyword>
<keyword id="KW-0808">Transferase</keyword>
<keyword id="KW-0819">tRNA processing</keyword>
<keyword id="KW-0820">tRNA-binding</keyword>
<organism>
    <name type="scientific">Burkholderia cenocepacia (strain ATCC BAA-245 / DSM 16553 / LMG 16656 / NCTC 13227 / J2315 / CF5610)</name>
    <name type="common">Burkholderia cepacia (strain J2315)</name>
    <dbReference type="NCBI Taxonomy" id="216591"/>
    <lineage>
        <taxon>Bacteria</taxon>
        <taxon>Pseudomonadati</taxon>
        <taxon>Pseudomonadota</taxon>
        <taxon>Betaproteobacteria</taxon>
        <taxon>Burkholderiales</taxon>
        <taxon>Burkholderiaceae</taxon>
        <taxon>Burkholderia</taxon>
        <taxon>Burkholderia cepacia complex</taxon>
    </lineage>
</organism>
<gene>
    <name evidence="1" type="primary">rph</name>
    <name type="ordered locus">BceJ2315_29600</name>
    <name type="ORF">BCAL3014</name>
</gene>